<proteinExistence type="evidence at protein level"/>
<keyword id="KW-1003">Cell membrane</keyword>
<keyword id="KW-0449">Lipoprotein</keyword>
<keyword id="KW-0472">Membrane</keyword>
<keyword id="KW-0564">Palmitate</keyword>
<keyword id="KW-1185">Reference proteome</keyword>
<keyword id="KW-0732">Signal</keyword>
<sequence>MNRCNIRLRLAGMTTWVASIALLAAALSGCGAGQISQTANQKPAVNGNRLTINNVLLRDIRIQAVQTSDFIQPGKAVDLVLVAVNQSPDVSDRLVGITSDIGSVTVAGDARLPASGMLFVGTPDGQIVAPGPLPSNQAAKATVNLTKPIANGLTYNFTFKFEKAGQGSVMVPISAGLATPHE</sequence>
<evidence type="ECO:0000255" key="1">
    <source>
        <dbReference type="PROSITE-ProRule" id="PRU00303"/>
    </source>
</evidence>
<dbReference type="EMBL" id="AL123456">
    <property type="protein sequence ID" value="CCP46407.1"/>
    <property type="molecule type" value="Genomic_DNA"/>
</dbReference>
<dbReference type="PIR" id="A70804">
    <property type="entry name" value="A70804"/>
</dbReference>
<dbReference type="RefSeq" id="NP_218101.1">
    <property type="nucleotide sequence ID" value="NC_000962.3"/>
</dbReference>
<dbReference type="RefSeq" id="WP_003900715.1">
    <property type="nucleotide sequence ID" value="NZ_NVQJ01000014.1"/>
</dbReference>
<dbReference type="SMR" id="P9WK63"/>
<dbReference type="STRING" id="83332.Rv3584"/>
<dbReference type="PaxDb" id="83332-Rv3584"/>
<dbReference type="DNASU" id="887254"/>
<dbReference type="GeneID" id="887254"/>
<dbReference type="KEGG" id="mtu:Rv3584"/>
<dbReference type="KEGG" id="mtv:RVBD_3584"/>
<dbReference type="TubercuList" id="Rv3584"/>
<dbReference type="eggNOG" id="COG2847">
    <property type="taxonomic scope" value="Bacteria"/>
</dbReference>
<dbReference type="InParanoid" id="P9WK63"/>
<dbReference type="OrthoDB" id="5188566at2"/>
<dbReference type="Proteomes" id="UP000001584">
    <property type="component" value="Chromosome"/>
</dbReference>
<dbReference type="GO" id="GO:0005576">
    <property type="term" value="C:extracellular region"/>
    <property type="evidence" value="ECO:0007005"/>
    <property type="project" value="MTBBASE"/>
</dbReference>
<dbReference type="GO" id="GO:0009274">
    <property type="term" value="C:peptidoglycan-based cell wall"/>
    <property type="evidence" value="ECO:0007005"/>
    <property type="project" value="MTBBASE"/>
</dbReference>
<dbReference type="GO" id="GO:0005886">
    <property type="term" value="C:plasma membrane"/>
    <property type="evidence" value="ECO:0007005"/>
    <property type="project" value="MTBBASE"/>
</dbReference>
<dbReference type="PROSITE" id="PS51257">
    <property type="entry name" value="PROKAR_LIPOPROTEIN"/>
    <property type="match status" value="1"/>
</dbReference>
<reference key="1">
    <citation type="journal article" date="1998" name="Nature">
        <title>Deciphering the biology of Mycobacterium tuberculosis from the complete genome sequence.</title>
        <authorList>
            <person name="Cole S.T."/>
            <person name="Brosch R."/>
            <person name="Parkhill J."/>
            <person name="Garnier T."/>
            <person name="Churcher C.M."/>
            <person name="Harris D.E."/>
            <person name="Gordon S.V."/>
            <person name="Eiglmeier K."/>
            <person name="Gas S."/>
            <person name="Barry C.E. III"/>
            <person name="Tekaia F."/>
            <person name="Badcock K."/>
            <person name="Basham D."/>
            <person name="Brown D."/>
            <person name="Chillingworth T."/>
            <person name="Connor R."/>
            <person name="Davies R.M."/>
            <person name="Devlin K."/>
            <person name="Feltwell T."/>
            <person name="Gentles S."/>
            <person name="Hamlin N."/>
            <person name="Holroyd S."/>
            <person name="Hornsby T."/>
            <person name="Jagels K."/>
            <person name="Krogh A."/>
            <person name="McLean J."/>
            <person name="Moule S."/>
            <person name="Murphy L.D."/>
            <person name="Oliver S."/>
            <person name="Osborne J."/>
            <person name="Quail M.A."/>
            <person name="Rajandream M.A."/>
            <person name="Rogers J."/>
            <person name="Rutter S."/>
            <person name="Seeger K."/>
            <person name="Skelton S."/>
            <person name="Squares S."/>
            <person name="Squares R."/>
            <person name="Sulston J.E."/>
            <person name="Taylor K."/>
            <person name="Whitehead S."/>
            <person name="Barrell B.G."/>
        </authorList>
    </citation>
    <scope>NUCLEOTIDE SEQUENCE [LARGE SCALE GENOMIC DNA]</scope>
    <source>
        <strain>ATCC 25618 / H37Rv</strain>
    </source>
</reference>
<reference key="2">
    <citation type="journal article" date="2011" name="Mol. Cell. Proteomics">
        <title>Proteogenomic analysis of Mycobacterium tuberculosis by high resolution mass spectrometry.</title>
        <authorList>
            <person name="Kelkar D.S."/>
            <person name="Kumar D."/>
            <person name="Kumar P."/>
            <person name="Balakrishnan L."/>
            <person name="Muthusamy B."/>
            <person name="Yadav A.K."/>
            <person name="Shrivastava P."/>
            <person name="Marimuthu A."/>
            <person name="Anand S."/>
            <person name="Sundaram H."/>
            <person name="Kingsbury R."/>
            <person name="Harsha H.C."/>
            <person name="Nair B."/>
            <person name="Prasad T.S."/>
            <person name="Chauhan D.S."/>
            <person name="Katoch K."/>
            <person name="Katoch V.M."/>
            <person name="Kumar P."/>
            <person name="Chaerkady R."/>
            <person name="Ramachandran S."/>
            <person name="Dash D."/>
            <person name="Pandey A."/>
        </authorList>
    </citation>
    <scope>IDENTIFICATION BY MASS SPECTROMETRY [LARGE SCALE ANALYSIS]</scope>
    <source>
        <strain>ATCC 25618 / H37Rv</strain>
    </source>
</reference>
<feature type="signal peptide" evidence="1">
    <location>
        <begin position="1"/>
        <end position="29"/>
    </location>
</feature>
<feature type="chain" id="PRO_0000018124" description="Putative lipoprotein LpqE">
    <location>
        <begin position="30"/>
        <end position="182"/>
    </location>
</feature>
<feature type="lipid moiety-binding region" description="N-palmitoyl cysteine" evidence="1">
    <location>
        <position position="30"/>
    </location>
</feature>
<feature type="lipid moiety-binding region" description="S-diacylglycerol cysteine" evidence="1">
    <location>
        <position position="30"/>
    </location>
</feature>
<name>LPQE_MYCTU</name>
<protein>
    <recommendedName>
        <fullName>Putative lipoprotein LpqE</fullName>
    </recommendedName>
</protein>
<organism>
    <name type="scientific">Mycobacterium tuberculosis (strain ATCC 25618 / H37Rv)</name>
    <dbReference type="NCBI Taxonomy" id="83332"/>
    <lineage>
        <taxon>Bacteria</taxon>
        <taxon>Bacillati</taxon>
        <taxon>Actinomycetota</taxon>
        <taxon>Actinomycetes</taxon>
        <taxon>Mycobacteriales</taxon>
        <taxon>Mycobacteriaceae</taxon>
        <taxon>Mycobacterium</taxon>
        <taxon>Mycobacterium tuberculosis complex</taxon>
    </lineage>
</organism>
<comment type="subcellular location">
    <subcellularLocation>
        <location evidence="1">Cell membrane</location>
        <topology evidence="1">Lipid-anchor</topology>
    </subcellularLocation>
</comment>
<gene>
    <name type="primary">lpqE</name>
    <name type="ordered locus">Rv3584</name>
    <name type="ORF">MTV024.02</name>
</gene>
<accession>P9WK63</accession>
<accession>L0TEK8</accession>
<accession>O53569</accession>
<accession>P65308</accession>